<proteinExistence type="inferred from homology"/>
<keyword id="KW-0378">Hydrolase</keyword>
<keyword id="KW-1185">Reference proteome</keyword>
<sequence length="171" mass="20198">MNYGVALFPSKPLQDLANSYRMRYDPHYTLIPPHVTLKEPFELEEQELPSVVKRVREIAKGVDPFPLEVYKVDTFYPVSNTLFFKIREHSALTELYEQLHTSPFKRNEKYSFVPHLTIGQNLSYDELSDNLGRLKMKQIQHEEIVDRIQLLYQLDNGSWTVYETFKLGKEE</sequence>
<protein>
    <recommendedName>
        <fullName evidence="1">Putative phosphoesterase BH1439</fullName>
        <ecNumber evidence="1">3.1.-.-</ecNumber>
    </recommendedName>
</protein>
<name>Y1439_HALH5</name>
<organism>
    <name type="scientific">Halalkalibacterium halodurans (strain ATCC BAA-125 / DSM 18197 / FERM 7344 / JCM 9153 / C-125)</name>
    <name type="common">Bacillus halodurans</name>
    <dbReference type="NCBI Taxonomy" id="272558"/>
    <lineage>
        <taxon>Bacteria</taxon>
        <taxon>Bacillati</taxon>
        <taxon>Bacillota</taxon>
        <taxon>Bacilli</taxon>
        <taxon>Bacillales</taxon>
        <taxon>Bacillaceae</taxon>
        <taxon>Halalkalibacterium (ex Joshi et al. 2022)</taxon>
    </lineage>
</organism>
<accession>Q9KCY0</accession>
<reference key="1">
    <citation type="journal article" date="2000" name="Nucleic Acids Res.">
        <title>Complete genome sequence of the alkaliphilic bacterium Bacillus halodurans and genomic sequence comparison with Bacillus subtilis.</title>
        <authorList>
            <person name="Takami H."/>
            <person name="Nakasone K."/>
            <person name="Takaki Y."/>
            <person name="Maeno G."/>
            <person name="Sasaki R."/>
            <person name="Masui N."/>
            <person name="Fuji F."/>
            <person name="Hirama C."/>
            <person name="Nakamura Y."/>
            <person name="Ogasawara N."/>
            <person name="Kuhara S."/>
            <person name="Horikoshi K."/>
        </authorList>
    </citation>
    <scope>NUCLEOTIDE SEQUENCE [LARGE SCALE GENOMIC DNA]</scope>
    <source>
        <strain>ATCC BAA-125 / DSM 18197 / FERM 7344 / JCM 9153 / C-125</strain>
    </source>
</reference>
<evidence type="ECO:0000255" key="1">
    <source>
        <dbReference type="HAMAP-Rule" id="MF_01444"/>
    </source>
</evidence>
<gene>
    <name type="ordered locus">BH1439</name>
</gene>
<comment type="similarity">
    <text evidence="1">Belongs to the 2H phosphoesterase superfamily. YjcG family.</text>
</comment>
<feature type="chain" id="PRO_0000299329" description="Putative phosphoesterase BH1439">
    <location>
        <begin position="1"/>
        <end position="171"/>
    </location>
</feature>
<feature type="short sequence motif" description="HXTX 1" evidence="1">
    <location>
        <begin position="34"/>
        <end position="37"/>
    </location>
</feature>
<feature type="short sequence motif" description="HXTX 2" evidence="1">
    <location>
        <begin position="115"/>
        <end position="118"/>
    </location>
</feature>
<feature type="active site" description="Proton donor" evidence="1">
    <location>
        <position position="34"/>
    </location>
</feature>
<feature type="active site" description="Proton acceptor" evidence="1">
    <location>
        <position position="115"/>
    </location>
</feature>
<dbReference type="EC" id="3.1.-.-" evidence="1"/>
<dbReference type="EMBL" id="BA000004">
    <property type="protein sequence ID" value="BAB05158.1"/>
    <property type="molecule type" value="Genomic_DNA"/>
</dbReference>
<dbReference type="PIR" id="G83829">
    <property type="entry name" value="G83829"/>
</dbReference>
<dbReference type="RefSeq" id="WP_010897604.1">
    <property type="nucleotide sequence ID" value="NC_002570.2"/>
</dbReference>
<dbReference type="SMR" id="Q9KCY0"/>
<dbReference type="STRING" id="272558.gene:10727337"/>
<dbReference type="KEGG" id="bha:BH1439"/>
<dbReference type="eggNOG" id="COG1514">
    <property type="taxonomic scope" value="Bacteria"/>
</dbReference>
<dbReference type="HOGENOM" id="CLU_132020_0_0_9"/>
<dbReference type="OrthoDB" id="1524661at2"/>
<dbReference type="Proteomes" id="UP000001258">
    <property type="component" value="Chromosome"/>
</dbReference>
<dbReference type="GO" id="GO:0016788">
    <property type="term" value="F:hydrolase activity, acting on ester bonds"/>
    <property type="evidence" value="ECO:0007669"/>
    <property type="project" value="UniProtKB-UniRule"/>
</dbReference>
<dbReference type="Gene3D" id="3.90.1140.10">
    <property type="entry name" value="Cyclic phosphodiesterase"/>
    <property type="match status" value="1"/>
</dbReference>
<dbReference type="HAMAP" id="MF_01444">
    <property type="entry name" value="2H_phosphoesterase_YjcG"/>
    <property type="match status" value="1"/>
</dbReference>
<dbReference type="InterPro" id="IPR050580">
    <property type="entry name" value="2H_phosphoesterase_YjcG-like"/>
</dbReference>
<dbReference type="InterPro" id="IPR009097">
    <property type="entry name" value="Cyclic_Pdiesterase"/>
</dbReference>
<dbReference type="InterPro" id="IPR022932">
    <property type="entry name" value="YjcG"/>
</dbReference>
<dbReference type="NCBIfam" id="NF010223">
    <property type="entry name" value="PRK13679.1"/>
    <property type="match status" value="1"/>
</dbReference>
<dbReference type="PANTHER" id="PTHR40037:SF1">
    <property type="entry name" value="PHOSPHOESTERASE SAOUHSC_00951-RELATED"/>
    <property type="match status" value="1"/>
</dbReference>
<dbReference type="PANTHER" id="PTHR40037">
    <property type="entry name" value="PHOSPHOESTERASE YJCG-RELATED"/>
    <property type="match status" value="1"/>
</dbReference>
<dbReference type="Pfam" id="PF13563">
    <property type="entry name" value="2_5_RNA_ligase2"/>
    <property type="match status" value="1"/>
</dbReference>
<dbReference type="SUPFAM" id="SSF55144">
    <property type="entry name" value="LigT-like"/>
    <property type="match status" value="1"/>
</dbReference>